<evidence type="ECO:0000255" key="1">
    <source>
        <dbReference type="HAMAP-Rule" id="MF_00268"/>
    </source>
</evidence>
<evidence type="ECO:0000256" key="2">
    <source>
        <dbReference type="SAM" id="MobiDB-lite"/>
    </source>
</evidence>
<evidence type="ECO:0000305" key="3"/>
<proteinExistence type="inferred from homology"/>
<keyword id="KW-0067">ATP-binding</keyword>
<keyword id="KW-0963">Cytoplasm</keyword>
<keyword id="KW-0227">DNA damage</keyword>
<keyword id="KW-0233">DNA recombination</keyword>
<keyword id="KW-0234">DNA repair</keyword>
<keyword id="KW-0238">DNA-binding</keyword>
<keyword id="KW-0547">Nucleotide-binding</keyword>
<keyword id="KW-1185">Reference proteome</keyword>
<keyword id="KW-0742">SOS response</keyword>
<feature type="chain" id="PRO_0000122696" description="Protein RecA">
    <location>
        <begin position="1"/>
        <end position="376"/>
    </location>
</feature>
<feature type="region of interest" description="Disordered" evidence="2">
    <location>
        <begin position="355"/>
        <end position="376"/>
    </location>
</feature>
<feature type="compositionally biased region" description="Acidic residues" evidence="2">
    <location>
        <begin position="363"/>
        <end position="376"/>
    </location>
</feature>
<feature type="binding site" evidence="1">
    <location>
        <begin position="78"/>
        <end position="85"/>
    </location>
    <ligand>
        <name>ATP</name>
        <dbReference type="ChEBI" id="CHEBI:30616"/>
    </ligand>
</feature>
<feature type="sequence conflict" description="In Ref. 2; CAA54563." evidence="3" ref="2">
    <original>A</original>
    <variation>H</variation>
    <location>
        <position position="2"/>
    </location>
</feature>
<dbReference type="EMBL" id="U14965">
    <property type="protein sequence ID" value="AAD12743.1"/>
    <property type="molecule type" value="Genomic_DNA"/>
</dbReference>
<dbReference type="EMBL" id="X77384">
    <property type="protein sequence ID" value="CAA54563.1"/>
    <property type="molecule type" value="Genomic_DNA"/>
</dbReference>
<dbReference type="EMBL" id="BA000036">
    <property type="protein sequence ID" value="BAB99348.1"/>
    <property type="molecule type" value="Genomic_DNA"/>
</dbReference>
<dbReference type="EMBL" id="BX927153">
    <property type="protein sequence ID" value="CAF20296.1"/>
    <property type="molecule type" value="Genomic_DNA"/>
</dbReference>
<dbReference type="EMBL" id="X75085">
    <property type="protein sequence ID" value="CAA52977.1"/>
    <property type="molecule type" value="Genomic_DNA"/>
</dbReference>
<dbReference type="PIR" id="I40728">
    <property type="entry name" value="I40728"/>
</dbReference>
<dbReference type="RefSeq" id="NP_601162.1">
    <property type="nucleotide sequence ID" value="NC_003450.3"/>
</dbReference>
<dbReference type="RefSeq" id="WP_003857444.1">
    <property type="nucleotide sequence ID" value="NC_006958.1"/>
</dbReference>
<dbReference type="SMR" id="P42442"/>
<dbReference type="STRING" id="196627.cg2141"/>
<dbReference type="GeneID" id="1019912"/>
<dbReference type="KEGG" id="cgb:cg2141"/>
<dbReference type="KEGG" id="cgl:Cgl1955"/>
<dbReference type="PATRIC" id="fig|196627.13.peg.1893"/>
<dbReference type="eggNOG" id="COG0468">
    <property type="taxonomic scope" value="Bacteria"/>
</dbReference>
<dbReference type="HOGENOM" id="CLU_040469_3_2_11"/>
<dbReference type="OrthoDB" id="9776733at2"/>
<dbReference type="BioCyc" id="CORYNE:G18NG-11547-MONOMER"/>
<dbReference type="Proteomes" id="UP000000582">
    <property type="component" value="Chromosome"/>
</dbReference>
<dbReference type="Proteomes" id="UP000001009">
    <property type="component" value="Chromosome"/>
</dbReference>
<dbReference type="GO" id="GO:0005829">
    <property type="term" value="C:cytosol"/>
    <property type="evidence" value="ECO:0007669"/>
    <property type="project" value="TreeGrafter"/>
</dbReference>
<dbReference type="GO" id="GO:0005524">
    <property type="term" value="F:ATP binding"/>
    <property type="evidence" value="ECO:0007669"/>
    <property type="project" value="UniProtKB-UniRule"/>
</dbReference>
<dbReference type="GO" id="GO:0016887">
    <property type="term" value="F:ATP hydrolysis activity"/>
    <property type="evidence" value="ECO:0007669"/>
    <property type="project" value="InterPro"/>
</dbReference>
<dbReference type="GO" id="GO:0140664">
    <property type="term" value="F:ATP-dependent DNA damage sensor activity"/>
    <property type="evidence" value="ECO:0007669"/>
    <property type="project" value="InterPro"/>
</dbReference>
<dbReference type="GO" id="GO:0003684">
    <property type="term" value="F:damaged DNA binding"/>
    <property type="evidence" value="ECO:0007669"/>
    <property type="project" value="UniProtKB-UniRule"/>
</dbReference>
<dbReference type="GO" id="GO:0003697">
    <property type="term" value="F:single-stranded DNA binding"/>
    <property type="evidence" value="ECO:0007669"/>
    <property type="project" value="UniProtKB-UniRule"/>
</dbReference>
<dbReference type="GO" id="GO:0006310">
    <property type="term" value="P:DNA recombination"/>
    <property type="evidence" value="ECO:0007669"/>
    <property type="project" value="UniProtKB-UniRule"/>
</dbReference>
<dbReference type="GO" id="GO:0006281">
    <property type="term" value="P:DNA repair"/>
    <property type="evidence" value="ECO:0007669"/>
    <property type="project" value="UniProtKB-UniRule"/>
</dbReference>
<dbReference type="GO" id="GO:0009432">
    <property type="term" value="P:SOS response"/>
    <property type="evidence" value="ECO:0000269"/>
    <property type="project" value="CollecTF"/>
</dbReference>
<dbReference type="CDD" id="cd00983">
    <property type="entry name" value="RecA"/>
    <property type="match status" value="1"/>
</dbReference>
<dbReference type="FunFam" id="3.40.50.300:FF:000087">
    <property type="entry name" value="Recombinase RecA"/>
    <property type="match status" value="1"/>
</dbReference>
<dbReference type="Gene3D" id="3.40.50.300">
    <property type="entry name" value="P-loop containing nucleotide triphosphate hydrolases"/>
    <property type="match status" value="1"/>
</dbReference>
<dbReference type="HAMAP" id="MF_00268">
    <property type="entry name" value="RecA"/>
    <property type="match status" value="1"/>
</dbReference>
<dbReference type="InterPro" id="IPR003593">
    <property type="entry name" value="AAA+_ATPase"/>
</dbReference>
<dbReference type="InterPro" id="IPR013765">
    <property type="entry name" value="DNA_recomb/repair_RecA"/>
</dbReference>
<dbReference type="InterPro" id="IPR020584">
    <property type="entry name" value="DNA_recomb/repair_RecA_CS"/>
</dbReference>
<dbReference type="InterPro" id="IPR027417">
    <property type="entry name" value="P-loop_NTPase"/>
</dbReference>
<dbReference type="InterPro" id="IPR049261">
    <property type="entry name" value="RecA-like_C"/>
</dbReference>
<dbReference type="InterPro" id="IPR049428">
    <property type="entry name" value="RecA-like_N"/>
</dbReference>
<dbReference type="InterPro" id="IPR020588">
    <property type="entry name" value="RecA_ATP-bd"/>
</dbReference>
<dbReference type="InterPro" id="IPR023400">
    <property type="entry name" value="RecA_C_sf"/>
</dbReference>
<dbReference type="InterPro" id="IPR020587">
    <property type="entry name" value="RecA_monomer-monomer_interface"/>
</dbReference>
<dbReference type="NCBIfam" id="TIGR02012">
    <property type="entry name" value="tigrfam_recA"/>
    <property type="match status" value="1"/>
</dbReference>
<dbReference type="PANTHER" id="PTHR45900:SF1">
    <property type="entry name" value="MITOCHONDRIAL DNA REPAIR PROTEIN RECA HOMOLOG-RELATED"/>
    <property type="match status" value="1"/>
</dbReference>
<dbReference type="PANTHER" id="PTHR45900">
    <property type="entry name" value="RECA"/>
    <property type="match status" value="1"/>
</dbReference>
<dbReference type="Pfam" id="PF00154">
    <property type="entry name" value="RecA"/>
    <property type="match status" value="1"/>
</dbReference>
<dbReference type="Pfam" id="PF21096">
    <property type="entry name" value="RecA_C"/>
    <property type="match status" value="1"/>
</dbReference>
<dbReference type="PRINTS" id="PR00142">
    <property type="entry name" value="RECA"/>
</dbReference>
<dbReference type="SMART" id="SM00382">
    <property type="entry name" value="AAA"/>
    <property type="match status" value="1"/>
</dbReference>
<dbReference type="SUPFAM" id="SSF52540">
    <property type="entry name" value="P-loop containing nucleoside triphosphate hydrolases"/>
    <property type="match status" value="1"/>
</dbReference>
<dbReference type="SUPFAM" id="SSF54752">
    <property type="entry name" value="RecA protein, C-terminal domain"/>
    <property type="match status" value="1"/>
</dbReference>
<dbReference type="PROSITE" id="PS00321">
    <property type="entry name" value="RECA_1"/>
    <property type="match status" value="1"/>
</dbReference>
<dbReference type="PROSITE" id="PS50162">
    <property type="entry name" value="RECA_2"/>
    <property type="match status" value="1"/>
</dbReference>
<dbReference type="PROSITE" id="PS50163">
    <property type="entry name" value="RECA_3"/>
    <property type="match status" value="1"/>
</dbReference>
<reference key="1">
    <citation type="submission" date="1994-09" db="EMBL/GenBank/DDBJ databases">
        <authorList>
            <person name="Kerins S.M."/>
            <person name="Fitzpatrick R."/>
            <person name="O'Donohue M."/>
            <person name="Dunican L.K."/>
        </authorList>
    </citation>
    <scope>NUCLEOTIDE SEQUENCE [GENOMIC DNA]</scope>
    <source>
        <strain>ATCC 13059 / LMG 3658 / NCIB 10332 / AS019 / 613</strain>
    </source>
</reference>
<reference key="2">
    <citation type="journal article" date="1994" name="DNA Seq.">
        <title>Nucleotide sequence of a recA gene from Corynebacterium glutamicum.</title>
        <authorList>
            <person name="Billman-Jacobe H."/>
        </authorList>
    </citation>
    <scope>NUCLEOTIDE SEQUENCE [GENOMIC DNA]</scope>
    <source>
        <strain>ATCC 13059 / LMG 3658 / NCIB 10332 / AS019 / 613</strain>
    </source>
</reference>
<reference key="3">
    <citation type="journal article" date="2003" name="Appl. Microbiol. Biotechnol.">
        <title>The Corynebacterium glutamicum genome: features and impacts on biotechnological processes.</title>
        <authorList>
            <person name="Ikeda M."/>
            <person name="Nakagawa S."/>
        </authorList>
    </citation>
    <scope>NUCLEOTIDE SEQUENCE [LARGE SCALE GENOMIC DNA]</scope>
    <source>
        <strain>ATCC 13032 / DSM 20300 / JCM 1318 / BCRC 11384 / CCUG 27702 / LMG 3730 / NBRC 12168 / NCIMB 10025 / NRRL B-2784 / 534</strain>
    </source>
</reference>
<reference key="4">
    <citation type="journal article" date="2003" name="J. Biotechnol.">
        <title>The complete Corynebacterium glutamicum ATCC 13032 genome sequence and its impact on the production of L-aspartate-derived amino acids and vitamins.</title>
        <authorList>
            <person name="Kalinowski J."/>
            <person name="Bathe B."/>
            <person name="Bartels D."/>
            <person name="Bischoff N."/>
            <person name="Bott M."/>
            <person name="Burkovski A."/>
            <person name="Dusch N."/>
            <person name="Eggeling L."/>
            <person name="Eikmanns B.J."/>
            <person name="Gaigalat L."/>
            <person name="Goesmann A."/>
            <person name="Hartmann M."/>
            <person name="Huthmacher K."/>
            <person name="Kraemer R."/>
            <person name="Linke B."/>
            <person name="McHardy A.C."/>
            <person name="Meyer F."/>
            <person name="Moeckel B."/>
            <person name="Pfefferle W."/>
            <person name="Puehler A."/>
            <person name="Rey D.A."/>
            <person name="Rueckert C."/>
            <person name="Rupp O."/>
            <person name="Sahm H."/>
            <person name="Wendisch V.F."/>
            <person name="Wiegraebe I."/>
            <person name="Tauch A."/>
        </authorList>
    </citation>
    <scope>NUCLEOTIDE SEQUENCE [LARGE SCALE GENOMIC DNA]</scope>
    <source>
        <strain>ATCC 13032 / DSM 20300 / JCM 1318 / BCRC 11384 / CCUG 27702 / LMG 3730 / NBRC 12168 / NCIMB 10025 / NRRL B-2784 / 534</strain>
    </source>
</reference>
<reference key="5">
    <citation type="journal article" date="1994" name="Appl. Microbiol. Biotechnol.">
        <title>Construction and characterization of recA mutant strains of Corynebacterium glutamicum and Brevibacterium lactofermentum.</title>
        <authorList>
            <person name="Fitzpatrick R."/>
            <person name="O'Donohue M."/>
            <person name="Joy J."/>
            <person name="Heery D.M."/>
            <person name="Dunican L.K."/>
        </authorList>
    </citation>
    <scope>NUCLEOTIDE SEQUENCE [GENOMIC DNA] OF 118-200</scope>
    <source>
        <strain>ATCC 13059 / LMG 3658 / NCIB 10332 / AS019 / 613</strain>
    </source>
</reference>
<accession>P42442</accession>
<comment type="function">
    <text>Can catalyze the hydrolysis of ATP in the presence of single-stranded DNA, the ATP-dependent uptake of single-stranded DNA by duplex DNA, and the ATP-dependent hybridization of homologous single-stranded DNAs. It interacts with LexA causing its activation and leading to its autocatalytic cleavage.</text>
</comment>
<comment type="subcellular location">
    <subcellularLocation>
        <location evidence="1">Cytoplasm</location>
    </subcellularLocation>
</comment>
<comment type="similarity">
    <text evidence="1">Belongs to the RecA family.</text>
</comment>
<protein>
    <recommendedName>
        <fullName evidence="1">Protein RecA</fullName>
    </recommendedName>
    <alternativeName>
        <fullName evidence="1">Recombinase A</fullName>
    </alternativeName>
</protein>
<organism>
    <name type="scientific">Corynebacterium glutamicum (strain ATCC 13032 / DSM 20300 / JCM 1318 / BCRC 11384 / CCUG 27702 / LMG 3730 / NBRC 12168 / NCIMB 10025 / NRRL B-2784 / 534)</name>
    <dbReference type="NCBI Taxonomy" id="196627"/>
    <lineage>
        <taxon>Bacteria</taxon>
        <taxon>Bacillati</taxon>
        <taxon>Actinomycetota</taxon>
        <taxon>Actinomycetes</taxon>
        <taxon>Mycobacteriales</taxon>
        <taxon>Corynebacteriaceae</taxon>
        <taxon>Corynebacterium</taxon>
    </lineage>
</organism>
<gene>
    <name evidence="1" type="primary">recA</name>
    <name type="ordered locus">Cgl1955</name>
    <name type="ordered locus">cg2141</name>
</gene>
<sequence>MAPKKTATKATAAKGNDRQKALDAALALIEKDFGKGAVMRLGDENRPPIQTISSGNTAIDIALGIGGFPRGRIVEVYGPESSGKTTVALHAIAQAQKAGGIAAFIDAEHALDPDYARKLGVDTDALLVSQPDTGEQALEIADMLVRSGAIDIIVIDSVAALTPKAEIEGEMGDSHVGLQARLMSQALRKMTGALYNSGTTAIFINQLREKIGVMFGSPETTTGGKALKFYASVRCDIRRIQTLKDGQDAIGNRTRLKVVKNKVSPPFKIAEFDIMYGEGISRESSVIDLAVDNGIVKKSGSWFTYEGEQLGQGKEKVRLSLKENPELTDELEDKIFKKLGVGKYAAASDELTDDPVELVPNVDFDDEADTEADAED</sequence>
<name>RECA_CORGL</name>